<sequence>MKDDVLKQQAHAAIQKKLGYAFRDISLLRQALTHRSHHAKHNERFEFVGDSILNYTVARMLFDAFPKLTEGELSRLRASLVNEGVLAEMAAEMNVGDGLYLGAGELKSGGFRRPSILADAMEAMFAAVSFDADFNTAEKVVRHLFADRVRRADFQNQAKDGKTALQEALQARRFALPKYRIEEQIGYANDSMFVISCDLGELGFVCRAKGTSRKAAEQEAAKEALKWLEEKLPLKRKKK</sequence>
<accession>Q9K0C8</accession>
<dbReference type="EC" id="3.1.26.3" evidence="1"/>
<dbReference type="EMBL" id="AE002098">
    <property type="protein sequence ID" value="AAF41104.1"/>
    <property type="molecule type" value="Genomic_DNA"/>
</dbReference>
<dbReference type="PIR" id="E81169">
    <property type="entry name" value="E81169"/>
</dbReference>
<dbReference type="RefSeq" id="NP_273728.1">
    <property type="nucleotide sequence ID" value="NC_003112.2"/>
</dbReference>
<dbReference type="RefSeq" id="WP_002225498.1">
    <property type="nucleotide sequence ID" value="NC_003112.2"/>
</dbReference>
<dbReference type="SMR" id="Q9K0C8"/>
<dbReference type="FunCoup" id="Q9K0C8">
    <property type="interactions" value="418"/>
</dbReference>
<dbReference type="STRING" id="122586.NMB0686"/>
<dbReference type="PaxDb" id="122586-NMB0686"/>
<dbReference type="KEGG" id="nme:NMB0686"/>
<dbReference type="PATRIC" id="fig|122586.8.peg.860"/>
<dbReference type="HOGENOM" id="CLU_000907_1_1_4"/>
<dbReference type="InParanoid" id="Q9K0C8"/>
<dbReference type="OrthoDB" id="9805026at2"/>
<dbReference type="Proteomes" id="UP000000425">
    <property type="component" value="Chromosome"/>
</dbReference>
<dbReference type="GO" id="GO:0005829">
    <property type="term" value="C:cytosol"/>
    <property type="evidence" value="ECO:0000318"/>
    <property type="project" value="GO_Central"/>
</dbReference>
<dbReference type="GO" id="GO:0003725">
    <property type="term" value="F:double-stranded RNA binding"/>
    <property type="evidence" value="ECO:0000318"/>
    <property type="project" value="GO_Central"/>
</dbReference>
<dbReference type="GO" id="GO:0046872">
    <property type="term" value="F:metal ion binding"/>
    <property type="evidence" value="ECO:0007669"/>
    <property type="project" value="UniProtKB-KW"/>
</dbReference>
<dbReference type="GO" id="GO:0004525">
    <property type="term" value="F:ribonuclease III activity"/>
    <property type="evidence" value="ECO:0000318"/>
    <property type="project" value="GO_Central"/>
</dbReference>
<dbReference type="GO" id="GO:0019843">
    <property type="term" value="F:rRNA binding"/>
    <property type="evidence" value="ECO:0007669"/>
    <property type="project" value="UniProtKB-KW"/>
</dbReference>
<dbReference type="GO" id="GO:0006397">
    <property type="term" value="P:mRNA processing"/>
    <property type="evidence" value="ECO:0007669"/>
    <property type="project" value="UniProtKB-UniRule"/>
</dbReference>
<dbReference type="GO" id="GO:0010468">
    <property type="term" value="P:regulation of gene expression"/>
    <property type="evidence" value="ECO:0000318"/>
    <property type="project" value="GO_Central"/>
</dbReference>
<dbReference type="GO" id="GO:0006396">
    <property type="term" value="P:RNA processing"/>
    <property type="evidence" value="ECO:0000318"/>
    <property type="project" value="GO_Central"/>
</dbReference>
<dbReference type="GO" id="GO:0006364">
    <property type="term" value="P:rRNA processing"/>
    <property type="evidence" value="ECO:0007669"/>
    <property type="project" value="UniProtKB-UniRule"/>
</dbReference>
<dbReference type="GO" id="GO:0008033">
    <property type="term" value="P:tRNA processing"/>
    <property type="evidence" value="ECO:0007669"/>
    <property type="project" value="UniProtKB-KW"/>
</dbReference>
<dbReference type="CDD" id="cd00593">
    <property type="entry name" value="RIBOc"/>
    <property type="match status" value="1"/>
</dbReference>
<dbReference type="FunFam" id="1.10.1520.10:FF:000001">
    <property type="entry name" value="Ribonuclease 3"/>
    <property type="match status" value="1"/>
</dbReference>
<dbReference type="Gene3D" id="3.30.160.20">
    <property type="match status" value="1"/>
</dbReference>
<dbReference type="Gene3D" id="1.10.1520.10">
    <property type="entry name" value="Ribonuclease III domain"/>
    <property type="match status" value="1"/>
</dbReference>
<dbReference type="HAMAP" id="MF_00104">
    <property type="entry name" value="RNase_III"/>
    <property type="match status" value="1"/>
</dbReference>
<dbReference type="InterPro" id="IPR014720">
    <property type="entry name" value="dsRBD_dom"/>
</dbReference>
<dbReference type="InterPro" id="IPR011907">
    <property type="entry name" value="RNase_III"/>
</dbReference>
<dbReference type="InterPro" id="IPR000999">
    <property type="entry name" value="RNase_III_dom"/>
</dbReference>
<dbReference type="InterPro" id="IPR036389">
    <property type="entry name" value="RNase_III_sf"/>
</dbReference>
<dbReference type="NCBIfam" id="TIGR02191">
    <property type="entry name" value="RNaseIII"/>
    <property type="match status" value="1"/>
</dbReference>
<dbReference type="PANTHER" id="PTHR11207:SF0">
    <property type="entry name" value="RIBONUCLEASE 3"/>
    <property type="match status" value="1"/>
</dbReference>
<dbReference type="PANTHER" id="PTHR11207">
    <property type="entry name" value="RIBONUCLEASE III"/>
    <property type="match status" value="1"/>
</dbReference>
<dbReference type="Pfam" id="PF00035">
    <property type="entry name" value="dsrm"/>
    <property type="match status" value="1"/>
</dbReference>
<dbReference type="Pfam" id="PF14622">
    <property type="entry name" value="Ribonucleas_3_3"/>
    <property type="match status" value="1"/>
</dbReference>
<dbReference type="SMART" id="SM00358">
    <property type="entry name" value="DSRM"/>
    <property type="match status" value="1"/>
</dbReference>
<dbReference type="SMART" id="SM00535">
    <property type="entry name" value="RIBOc"/>
    <property type="match status" value="1"/>
</dbReference>
<dbReference type="SUPFAM" id="SSF54768">
    <property type="entry name" value="dsRNA-binding domain-like"/>
    <property type="match status" value="1"/>
</dbReference>
<dbReference type="SUPFAM" id="SSF69065">
    <property type="entry name" value="RNase III domain-like"/>
    <property type="match status" value="1"/>
</dbReference>
<dbReference type="PROSITE" id="PS50137">
    <property type="entry name" value="DS_RBD"/>
    <property type="match status" value="1"/>
</dbReference>
<dbReference type="PROSITE" id="PS00517">
    <property type="entry name" value="RNASE_3_1"/>
    <property type="match status" value="1"/>
</dbReference>
<dbReference type="PROSITE" id="PS50142">
    <property type="entry name" value="RNASE_3_2"/>
    <property type="match status" value="1"/>
</dbReference>
<protein>
    <recommendedName>
        <fullName evidence="1">Ribonuclease 3</fullName>
        <ecNumber evidence="1">3.1.26.3</ecNumber>
    </recommendedName>
    <alternativeName>
        <fullName evidence="1">Ribonuclease III</fullName>
        <shortName evidence="1">RNase III</shortName>
    </alternativeName>
</protein>
<keyword id="KW-0963">Cytoplasm</keyword>
<keyword id="KW-0255">Endonuclease</keyword>
<keyword id="KW-0378">Hydrolase</keyword>
<keyword id="KW-0460">Magnesium</keyword>
<keyword id="KW-0479">Metal-binding</keyword>
<keyword id="KW-0507">mRNA processing</keyword>
<keyword id="KW-0540">Nuclease</keyword>
<keyword id="KW-1185">Reference proteome</keyword>
<keyword id="KW-0694">RNA-binding</keyword>
<keyword id="KW-0698">rRNA processing</keyword>
<keyword id="KW-0699">rRNA-binding</keyword>
<keyword id="KW-0819">tRNA processing</keyword>
<gene>
    <name evidence="1" type="primary">rnc</name>
    <name type="ordered locus">NMB0686</name>
</gene>
<organism>
    <name type="scientific">Neisseria meningitidis serogroup B (strain ATCC BAA-335 / MC58)</name>
    <dbReference type="NCBI Taxonomy" id="122586"/>
    <lineage>
        <taxon>Bacteria</taxon>
        <taxon>Pseudomonadati</taxon>
        <taxon>Pseudomonadota</taxon>
        <taxon>Betaproteobacteria</taxon>
        <taxon>Neisseriales</taxon>
        <taxon>Neisseriaceae</taxon>
        <taxon>Neisseria</taxon>
    </lineage>
</organism>
<name>RNC_NEIMB</name>
<comment type="function">
    <text evidence="1">Digests double-stranded RNA. Involved in the processing of primary rRNA transcript to yield the immediate precursors to the large and small rRNAs (23S and 16S). Processes some mRNAs, and tRNAs when they are encoded in the rRNA operon. Processes pre-crRNA and tracrRNA of type II CRISPR loci if present in the organism.</text>
</comment>
<comment type="catalytic activity">
    <reaction evidence="1">
        <text>Endonucleolytic cleavage to 5'-phosphomonoester.</text>
        <dbReference type="EC" id="3.1.26.3"/>
    </reaction>
</comment>
<comment type="cofactor">
    <cofactor evidence="1">
        <name>Mg(2+)</name>
        <dbReference type="ChEBI" id="CHEBI:18420"/>
    </cofactor>
</comment>
<comment type="subunit">
    <text evidence="1">Homodimer.</text>
</comment>
<comment type="subcellular location">
    <subcellularLocation>
        <location evidence="1">Cytoplasm</location>
    </subcellularLocation>
</comment>
<comment type="similarity">
    <text evidence="1">Belongs to the ribonuclease III family.</text>
</comment>
<feature type="chain" id="PRO_0000180416" description="Ribonuclease 3">
    <location>
        <begin position="1"/>
        <end position="239"/>
    </location>
</feature>
<feature type="domain" description="RNase III" evidence="1">
    <location>
        <begin position="11"/>
        <end position="133"/>
    </location>
</feature>
<feature type="domain" description="DRBM" evidence="1">
    <location>
        <begin position="160"/>
        <end position="230"/>
    </location>
</feature>
<feature type="active site" evidence="1">
    <location>
        <position position="50"/>
    </location>
</feature>
<feature type="active site" evidence="1">
    <location>
        <position position="122"/>
    </location>
</feature>
<feature type="binding site" evidence="1">
    <location>
        <position position="46"/>
    </location>
    <ligand>
        <name>Mg(2+)</name>
        <dbReference type="ChEBI" id="CHEBI:18420"/>
    </ligand>
</feature>
<feature type="binding site" evidence="1">
    <location>
        <position position="119"/>
    </location>
    <ligand>
        <name>Mg(2+)</name>
        <dbReference type="ChEBI" id="CHEBI:18420"/>
    </ligand>
</feature>
<feature type="binding site" evidence="1">
    <location>
        <position position="122"/>
    </location>
    <ligand>
        <name>Mg(2+)</name>
        <dbReference type="ChEBI" id="CHEBI:18420"/>
    </ligand>
</feature>
<reference key="1">
    <citation type="journal article" date="2000" name="Science">
        <title>Complete genome sequence of Neisseria meningitidis serogroup B strain MC58.</title>
        <authorList>
            <person name="Tettelin H."/>
            <person name="Saunders N.J."/>
            <person name="Heidelberg J.F."/>
            <person name="Jeffries A.C."/>
            <person name="Nelson K.E."/>
            <person name="Eisen J.A."/>
            <person name="Ketchum K.A."/>
            <person name="Hood D.W."/>
            <person name="Peden J.F."/>
            <person name="Dodson R.J."/>
            <person name="Nelson W.C."/>
            <person name="Gwinn M.L."/>
            <person name="DeBoy R.T."/>
            <person name="Peterson J.D."/>
            <person name="Hickey E.K."/>
            <person name="Haft D.H."/>
            <person name="Salzberg S.L."/>
            <person name="White O."/>
            <person name="Fleischmann R.D."/>
            <person name="Dougherty B.A."/>
            <person name="Mason T.M."/>
            <person name="Ciecko A."/>
            <person name="Parksey D.S."/>
            <person name="Blair E."/>
            <person name="Cittone H."/>
            <person name="Clark E.B."/>
            <person name="Cotton M.D."/>
            <person name="Utterback T.R."/>
            <person name="Khouri H.M."/>
            <person name="Qin H."/>
            <person name="Vamathevan J.J."/>
            <person name="Gill J."/>
            <person name="Scarlato V."/>
            <person name="Masignani V."/>
            <person name="Pizza M."/>
            <person name="Grandi G."/>
            <person name="Sun L."/>
            <person name="Smith H.O."/>
            <person name="Fraser C.M."/>
            <person name="Moxon E.R."/>
            <person name="Rappuoli R."/>
            <person name="Venter J.C."/>
        </authorList>
    </citation>
    <scope>NUCLEOTIDE SEQUENCE [LARGE SCALE GENOMIC DNA]</scope>
    <source>
        <strain>ATCC BAA-335 / MC58</strain>
    </source>
</reference>
<proteinExistence type="inferred from homology"/>
<evidence type="ECO:0000255" key="1">
    <source>
        <dbReference type="HAMAP-Rule" id="MF_00104"/>
    </source>
</evidence>